<comment type="function">
    <text evidence="5">Molecular adapter which is involved in cilium biogenesis. Part of a functional complex including OFD1 a centriolar protein involved in cilium assembly. Could regulate the cAMP-dependent phosphorylation of OFD1, and its subsequent ubiquitination by PJA2 which ultimately leads to its proteasomal degradation.</text>
</comment>
<comment type="subunit">
    <text evidence="5">Interacts with PJA2; the interaction is direct and recruits PJA2 to centrosomes (PubMed:33934390). Interacts with OFD1; regulates its activity in cilium assembly (PubMed:33934390). Interacts with PRKACA (PubMed:33934390).</text>
</comment>
<comment type="subcellular location">
    <subcellularLocation>
        <location evidence="5">Cytoplasm</location>
        <location evidence="5">Cytoskeleton</location>
        <location evidence="5">Microtubule organizing center</location>
        <location evidence="5">Centrosome</location>
    </subcellularLocation>
    <subcellularLocation>
        <location evidence="4">Cytoplasm</location>
        <location evidence="4">Cytoskeleton</location>
        <location evidence="4">Microtubule organizing center</location>
        <location evidence="4">Centrosome</location>
        <location evidence="4">Centriolar satellite</location>
    </subcellularLocation>
    <subcellularLocation>
        <location evidence="5">Cytoplasm</location>
        <location evidence="5">Cytoskeleton</location>
        <location evidence="5">Cilium basal body</location>
    </subcellularLocation>
</comment>
<comment type="alternative products">
    <event type="alternative splicing"/>
    <isoform>
        <id>Q96DN5-1</id>
        <name>1</name>
        <sequence type="displayed"/>
    </isoform>
    <isoform>
        <id>Q96DN5-2</id>
        <name>2</name>
        <sequence type="described" ref="VSP_016184"/>
    </isoform>
    <isoform>
        <id>Q96DN5-3</id>
        <name>3</name>
        <sequence type="described" ref="VSP_043414 VSP_016184"/>
    </isoform>
</comment>
<comment type="sequence caution" evidence="7">
    <conflict type="erroneous initiation">
        <sequence resource="EMBL-CDS" id="AAH27237"/>
    </conflict>
    <text>Truncated N-terminus.</text>
</comment>
<sequence length="1066" mass="124189">MQSTDLGNKESGKIWHRKPSPATRDGIIVNIIHNTSDYHPKVLRFLNVAFDGTGDCLIAGDHQGNIYVFDLHGNRFNLVQRTAQACTALAFNLRRKSEFLVALADYSIKCFDTVTKELVSWMRGHESSVFSISVHASGKYAITTSSDTAQLWDLDTFQRKRKLNIRQSVGIQKVFFLPLSNTILSCFKDNSIFAWECDTLFCKYQLPAPPESSSILYKVFAVTRDGRILAAGGKSNHLHLWCLEARQLFRIIQMPTKVRAIRHLEFLPDSFDAGSNQVLGVLSQDGIMRFINMQTCKLLFEIGSLDEGISSSAISPHGRYIASIMENGSLNIYSVQALTQEINKPPPPLVKVIEDLPKNKLSSSDLKMKVTSGRVQQPAKSRESKMQTRILKQDLTGDFESKKNELPDGLNKKRLQILLKGYGEYPTKYRMFIWRSLLQLPENHTAFSTLIDKGTHVAFLNLQKKYPIKSRKLLRVLQRTLSALAHWSVIFSDTPYLPLLAFPFVKLFQNNQLICFEVIATLIINWCQHWFEYFPNPPINILSMIENVLAFHDKELLQHFIDHDITSQLYAWPLLETVFSEVLTREEWLKLFDNIFSNHPSFLLMTVVAYNICSRTPLLSCNLKDDFEFFFHHRNNLDINVVIRQVYHLMETTPTDIHPDSMLNVFVALTKGQYPVFNQYPKFIVDYQTQERERIRNDELDYLRERQTVEDMQAKVDQQRVEDEAWYQKQELLRKAEETRREMLLQEEEKMIQQRQRLAAVKRELKVKEMHLQDAARRRFLKLQQDQQEMELRRLDDEIGRKVYMRDREIAATARDLEMRQLELESQKRLYEKNLTENQEALAKEMRADADAYRRKVDLEEHMFHKLIEAGETQSQKTQKVIKENLAKAEQACLNTDWQIQSLHKQKCDDLQRNKCYQEVAKLLRENRRKEIEIINAMVEEEAKKWKEAEGKEFRLRSAKKASALSDASRKWFLKQEINAAVEHAENPCHKEEPRFQNEQDSSCLPRTSQLNDSSEMDPSTQISLNRRAVEWDTTGQNLIKKVRNLRQRLTARARHRCQTPHLLAA</sequence>
<feature type="chain" id="PRO_0000051420" description="TBC1 domain family member 31">
    <location>
        <begin position="1"/>
        <end position="1066"/>
    </location>
</feature>
<feature type="repeat" description="WD 1">
    <location>
        <begin position="33"/>
        <end position="74"/>
    </location>
</feature>
<feature type="repeat" description="WD 2">
    <location>
        <begin position="75"/>
        <end position="116"/>
    </location>
</feature>
<feature type="repeat" description="WD 3">
    <location>
        <begin position="117"/>
        <end position="157"/>
    </location>
</feature>
<feature type="repeat" description="WD 4">
    <location>
        <begin position="158"/>
        <end position="200"/>
    </location>
</feature>
<feature type="repeat" description="WD 5">
    <location>
        <begin position="201"/>
        <end position="248"/>
    </location>
</feature>
<feature type="repeat" description="WD 6">
    <location>
        <begin position="249"/>
        <end position="296"/>
    </location>
</feature>
<feature type="repeat" description="WD 7">
    <location>
        <begin position="297"/>
        <end position="334"/>
    </location>
</feature>
<feature type="domain" description="Rab-GAP TBC" evidence="2">
    <location>
        <begin position="424"/>
        <end position="599"/>
    </location>
</feature>
<feature type="region of interest" description="Disordered" evidence="3">
    <location>
        <begin position="989"/>
        <end position="1020"/>
    </location>
</feature>
<feature type="region of interest" description="Mediates direct interaction with PJA2" evidence="5">
    <location>
        <begin position="1053"/>
        <end position="1056"/>
    </location>
</feature>
<feature type="coiled-coil region" evidence="1">
    <location>
        <begin position="728"/>
        <end position="861"/>
    </location>
</feature>
<feature type="coiled-coil region" evidence="1">
    <location>
        <begin position="914"/>
        <end position="948"/>
    </location>
</feature>
<feature type="compositionally biased region" description="Basic and acidic residues" evidence="3">
    <location>
        <begin position="989"/>
        <end position="998"/>
    </location>
</feature>
<feature type="compositionally biased region" description="Polar residues" evidence="3">
    <location>
        <begin position="999"/>
        <end position="1020"/>
    </location>
</feature>
<feature type="splice variant" id="VSP_043414" description="In isoform 3." evidence="6">
    <location>
        <begin position="802"/>
        <end position="832"/>
    </location>
</feature>
<feature type="splice variant" id="VSP_016184" description="In isoform 2 and isoform 3." evidence="6">
    <location>
        <begin position="880"/>
        <end position="944"/>
    </location>
</feature>
<feature type="sequence variant" id="VAR_027960" description="In dbSNP:rs16897967.">
    <original>R</original>
    <variation>H</variation>
    <location>
        <position position="414"/>
    </location>
</feature>
<feature type="sequence variant" id="VAR_027961" description="In dbSNP:rs16898023.">
    <original>V</original>
    <variation>F</variation>
    <location>
        <position position="709"/>
    </location>
</feature>
<feature type="sequence variant" id="VAR_057632" description="In dbSNP:rs34994118.">
    <original>A</original>
    <variation>T</variation>
    <location>
        <position position="1065"/>
    </location>
</feature>
<feature type="mutagenesis site" description="Loss of interaction with PJA2." evidence="5">
    <original>RARH</original>
    <variation>AADA</variation>
    <location>
        <begin position="1053"/>
        <end position="1056"/>
    </location>
</feature>
<feature type="sequence conflict" description="In Ref. 1; BAB71182." evidence="7" ref="1">
    <original>K</original>
    <variation>N</variation>
    <location>
        <position position="358"/>
    </location>
</feature>
<feature type="sequence conflict" description="In Ref. 3; AAH27237." evidence="7" ref="3">
    <original>Q</original>
    <variation>S</variation>
    <location>
        <position position="718"/>
    </location>
</feature>
<reference key="1">
    <citation type="journal article" date="2004" name="Nat. Genet.">
        <title>Complete sequencing and characterization of 21,243 full-length human cDNAs.</title>
        <authorList>
            <person name="Ota T."/>
            <person name="Suzuki Y."/>
            <person name="Nishikawa T."/>
            <person name="Otsuki T."/>
            <person name="Sugiyama T."/>
            <person name="Irie R."/>
            <person name="Wakamatsu A."/>
            <person name="Hayashi K."/>
            <person name="Sato H."/>
            <person name="Nagai K."/>
            <person name="Kimura K."/>
            <person name="Makita H."/>
            <person name="Sekine M."/>
            <person name="Obayashi M."/>
            <person name="Nishi T."/>
            <person name="Shibahara T."/>
            <person name="Tanaka T."/>
            <person name="Ishii S."/>
            <person name="Yamamoto J."/>
            <person name="Saito K."/>
            <person name="Kawai Y."/>
            <person name="Isono Y."/>
            <person name="Nakamura Y."/>
            <person name="Nagahari K."/>
            <person name="Murakami K."/>
            <person name="Yasuda T."/>
            <person name="Iwayanagi T."/>
            <person name="Wagatsuma M."/>
            <person name="Shiratori A."/>
            <person name="Sudo H."/>
            <person name="Hosoiri T."/>
            <person name="Kaku Y."/>
            <person name="Kodaira H."/>
            <person name="Kondo H."/>
            <person name="Sugawara M."/>
            <person name="Takahashi M."/>
            <person name="Kanda K."/>
            <person name="Yokoi T."/>
            <person name="Furuya T."/>
            <person name="Kikkawa E."/>
            <person name="Omura Y."/>
            <person name="Abe K."/>
            <person name="Kamihara K."/>
            <person name="Katsuta N."/>
            <person name="Sato K."/>
            <person name="Tanikawa M."/>
            <person name="Yamazaki M."/>
            <person name="Ninomiya K."/>
            <person name="Ishibashi T."/>
            <person name="Yamashita H."/>
            <person name="Murakawa K."/>
            <person name="Fujimori K."/>
            <person name="Tanai H."/>
            <person name="Kimata M."/>
            <person name="Watanabe M."/>
            <person name="Hiraoka S."/>
            <person name="Chiba Y."/>
            <person name="Ishida S."/>
            <person name="Ono Y."/>
            <person name="Takiguchi S."/>
            <person name="Watanabe S."/>
            <person name="Yosida M."/>
            <person name="Hotuta T."/>
            <person name="Kusano J."/>
            <person name="Kanehori K."/>
            <person name="Takahashi-Fujii A."/>
            <person name="Hara H."/>
            <person name="Tanase T.-O."/>
            <person name="Nomura Y."/>
            <person name="Togiya S."/>
            <person name="Komai F."/>
            <person name="Hara R."/>
            <person name="Takeuchi K."/>
            <person name="Arita M."/>
            <person name="Imose N."/>
            <person name="Musashino K."/>
            <person name="Yuuki H."/>
            <person name="Oshima A."/>
            <person name="Sasaki N."/>
            <person name="Aotsuka S."/>
            <person name="Yoshikawa Y."/>
            <person name="Matsunawa H."/>
            <person name="Ichihara T."/>
            <person name="Shiohata N."/>
            <person name="Sano S."/>
            <person name="Moriya S."/>
            <person name="Momiyama H."/>
            <person name="Satoh N."/>
            <person name="Takami S."/>
            <person name="Terashima Y."/>
            <person name="Suzuki O."/>
            <person name="Nakagawa S."/>
            <person name="Senoh A."/>
            <person name="Mizoguchi H."/>
            <person name="Goto Y."/>
            <person name="Shimizu F."/>
            <person name="Wakebe H."/>
            <person name="Hishigaki H."/>
            <person name="Watanabe T."/>
            <person name="Sugiyama A."/>
            <person name="Takemoto M."/>
            <person name="Kawakami B."/>
            <person name="Yamazaki M."/>
            <person name="Watanabe K."/>
            <person name="Kumagai A."/>
            <person name="Itakura S."/>
            <person name="Fukuzumi Y."/>
            <person name="Fujimori Y."/>
            <person name="Komiyama M."/>
            <person name="Tashiro H."/>
            <person name="Tanigami A."/>
            <person name="Fujiwara T."/>
            <person name="Ono T."/>
            <person name="Yamada K."/>
            <person name="Fujii Y."/>
            <person name="Ozaki K."/>
            <person name="Hirao M."/>
            <person name="Ohmori Y."/>
            <person name="Kawabata A."/>
            <person name="Hikiji T."/>
            <person name="Kobatake N."/>
            <person name="Inagaki H."/>
            <person name="Ikema Y."/>
            <person name="Okamoto S."/>
            <person name="Okitani R."/>
            <person name="Kawakami T."/>
            <person name="Noguchi S."/>
            <person name="Itoh T."/>
            <person name="Shigeta K."/>
            <person name="Senba T."/>
            <person name="Matsumura K."/>
            <person name="Nakajima Y."/>
            <person name="Mizuno T."/>
            <person name="Morinaga M."/>
            <person name="Sasaki M."/>
            <person name="Togashi T."/>
            <person name="Oyama M."/>
            <person name="Hata H."/>
            <person name="Watanabe M."/>
            <person name="Komatsu T."/>
            <person name="Mizushima-Sugano J."/>
            <person name="Satoh T."/>
            <person name="Shirai Y."/>
            <person name="Takahashi Y."/>
            <person name="Nakagawa K."/>
            <person name="Okumura K."/>
            <person name="Nagase T."/>
            <person name="Nomura N."/>
            <person name="Kikuchi H."/>
            <person name="Masuho Y."/>
            <person name="Yamashita R."/>
            <person name="Nakai K."/>
            <person name="Yada T."/>
            <person name="Nakamura Y."/>
            <person name="Ohara O."/>
            <person name="Isogai T."/>
            <person name="Sugano S."/>
        </authorList>
    </citation>
    <scope>NUCLEOTIDE SEQUENCE [LARGE SCALE MRNA] (ISOFORM 1)</scope>
    <source>
        <tissue>Teratocarcinoma</tissue>
    </source>
</reference>
<reference key="2">
    <citation type="journal article" date="2006" name="Nature">
        <title>DNA sequence and analysis of human chromosome 8.</title>
        <authorList>
            <person name="Nusbaum C."/>
            <person name="Mikkelsen T.S."/>
            <person name="Zody M.C."/>
            <person name="Asakawa S."/>
            <person name="Taudien S."/>
            <person name="Garber M."/>
            <person name="Kodira C.D."/>
            <person name="Schueler M.G."/>
            <person name="Shimizu A."/>
            <person name="Whittaker C.A."/>
            <person name="Chang J.L."/>
            <person name="Cuomo C.A."/>
            <person name="Dewar K."/>
            <person name="FitzGerald M.G."/>
            <person name="Yang X."/>
            <person name="Allen N.R."/>
            <person name="Anderson S."/>
            <person name="Asakawa T."/>
            <person name="Blechschmidt K."/>
            <person name="Bloom T."/>
            <person name="Borowsky M.L."/>
            <person name="Butler J."/>
            <person name="Cook A."/>
            <person name="Corum B."/>
            <person name="DeArellano K."/>
            <person name="DeCaprio D."/>
            <person name="Dooley K.T."/>
            <person name="Dorris L. III"/>
            <person name="Engels R."/>
            <person name="Gloeckner G."/>
            <person name="Hafez N."/>
            <person name="Hagopian D.S."/>
            <person name="Hall J.L."/>
            <person name="Ishikawa S.K."/>
            <person name="Jaffe D.B."/>
            <person name="Kamat A."/>
            <person name="Kudoh J."/>
            <person name="Lehmann R."/>
            <person name="Lokitsang T."/>
            <person name="Macdonald P."/>
            <person name="Major J.E."/>
            <person name="Matthews C.D."/>
            <person name="Mauceli E."/>
            <person name="Menzel U."/>
            <person name="Mihalev A.H."/>
            <person name="Minoshima S."/>
            <person name="Murayama Y."/>
            <person name="Naylor J.W."/>
            <person name="Nicol R."/>
            <person name="Nguyen C."/>
            <person name="O'Leary S.B."/>
            <person name="O'Neill K."/>
            <person name="Parker S.C.J."/>
            <person name="Polley A."/>
            <person name="Raymond C.K."/>
            <person name="Reichwald K."/>
            <person name="Rodriguez J."/>
            <person name="Sasaki T."/>
            <person name="Schilhabel M."/>
            <person name="Siddiqui R."/>
            <person name="Smith C.L."/>
            <person name="Sneddon T.P."/>
            <person name="Talamas J.A."/>
            <person name="Tenzin P."/>
            <person name="Topham K."/>
            <person name="Venkataraman V."/>
            <person name="Wen G."/>
            <person name="Yamazaki S."/>
            <person name="Young S.K."/>
            <person name="Zeng Q."/>
            <person name="Zimmer A.R."/>
            <person name="Rosenthal A."/>
            <person name="Birren B.W."/>
            <person name="Platzer M."/>
            <person name="Shimizu N."/>
            <person name="Lander E.S."/>
        </authorList>
    </citation>
    <scope>NUCLEOTIDE SEQUENCE [LARGE SCALE GENOMIC DNA]</scope>
</reference>
<reference key="3">
    <citation type="journal article" date="2004" name="Genome Res.">
        <title>The status, quality, and expansion of the NIH full-length cDNA project: the Mammalian Gene Collection (MGC).</title>
        <authorList>
            <consortium name="The MGC Project Team"/>
        </authorList>
    </citation>
    <scope>NUCLEOTIDE SEQUENCE [LARGE SCALE MRNA] (ISOFORMS 1 AND 3)</scope>
    <scope>NUCLEOTIDE SEQUENCE [LARGE SCALE MRNA] OF 547-1066 (ISOFORM 2)</scope>
    <source>
        <tissue>Lung</tissue>
        <tissue>Urinary bladder</tissue>
    </source>
</reference>
<reference key="4">
    <citation type="journal article" date="2003" name="Nature">
        <title>Proteomic characterization of the human centrosome by protein correlation profiling.</title>
        <authorList>
            <person name="Andersen J.S."/>
            <person name="Wilkinson C.J."/>
            <person name="Mayor T."/>
            <person name="Mortensen P."/>
            <person name="Nigg E.A."/>
            <person name="Mann M."/>
        </authorList>
    </citation>
    <scope>IDENTIFICATION BY MASS SPECTROMETRY</scope>
    <source>
        <tissue>Lymphoblast</tissue>
    </source>
</reference>
<reference key="5">
    <citation type="journal article" date="2013" name="J. Proteome Res.">
        <title>Toward a comprehensive characterization of a human cancer cell phosphoproteome.</title>
        <authorList>
            <person name="Zhou H."/>
            <person name="Di Palma S."/>
            <person name="Preisinger C."/>
            <person name="Peng M."/>
            <person name="Polat A.N."/>
            <person name="Heck A.J."/>
            <person name="Mohammed S."/>
        </authorList>
    </citation>
    <scope>IDENTIFICATION BY MASS SPECTROMETRY [LARGE SCALE ANALYSIS]</scope>
    <source>
        <tissue>Erythroleukemia</tissue>
    </source>
</reference>
<reference key="6">
    <citation type="journal article" date="2015" name="Cell">
        <title>A Dynamic Protein Interaction Landscape of the Human Centrosome-Cilium Interface.</title>
        <authorList>
            <person name="Gupta G.D."/>
            <person name="Coyaud E."/>
            <person name="Goncalves J."/>
            <person name="Mojarad B.A."/>
            <person name="Liu Y."/>
            <person name="Wu Q."/>
            <person name="Gheiratmand L."/>
            <person name="Comartin D."/>
            <person name="Tkach J.M."/>
            <person name="Cheung S.W."/>
            <person name="Bashkurov M."/>
            <person name="Hasegan M."/>
            <person name="Knight J.D."/>
            <person name="Lin Z.Y."/>
            <person name="Schueler M."/>
            <person name="Hildebrandt F."/>
            <person name="Moffat J."/>
            <person name="Gingras A.C."/>
            <person name="Raught B."/>
            <person name="Pelletier L."/>
        </authorList>
    </citation>
    <scope>SUBCELLULAR LOCATION</scope>
</reference>
<reference key="7">
    <citation type="journal article" date="2021" name="EMBO J.">
        <title>The TBC1D31/praja2 complex controls primary ciliogenesis through PKA-directed OFD1 ubiquitylation.</title>
        <authorList>
            <person name="Senatore E."/>
            <person name="Chiuso F."/>
            <person name="Rinaldi L."/>
            <person name="Intartaglia D."/>
            <person name="Delle Donne R."/>
            <person name="Pedone E."/>
            <person name="Catalanotti B."/>
            <person name="Pirone L."/>
            <person name="Fiorillo B."/>
            <person name="Moraca F."/>
            <person name="Giamundo G."/>
            <person name="Scala G."/>
            <person name="Raffeiner A."/>
            <person name="Torres-Quesada O."/>
            <person name="Stefan E."/>
            <person name="Kwiatkowski M."/>
            <person name="van Pijkeren A."/>
            <person name="Morleo M."/>
            <person name="Franco B."/>
            <person name="Garbi C."/>
            <person name="Conte I."/>
            <person name="Feliciello A."/>
        </authorList>
    </citation>
    <scope>FUNCTION</scope>
    <scope>INTERACTION WITH OFD1; PJA2 AND PRKACA</scope>
    <scope>SUBCELLULAR LOCATION</scope>
    <scope>REGION</scope>
    <scope>MUTAGENESIS OF 1053-ARG--HIS-1056</scope>
</reference>
<protein>
    <recommendedName>
        <fullName evidence="8">TBC1 domain family member 31</fullName>
    </recommendedName>
    <alternativeName>
        <fullName evidence="9">WD repeat-containing protein 67</fullName>
    </alternativeName>
</protein>
<dbReference type="EMBL" id="AK056434">
    <property type="protein sequence ID" value="BAB71182.1"/>
    <property type="molecule type" value="mRNA"/>
</dbReference>
<dbReference type="EMBL" id="AC100873">
    <property type="status" value="NOT_ANNOTATED_CDS"/>
    <property type="molecule type" value="Genomic_DNA"/>
</dbReference>
<dbReference type="EMBL" id="AC104316">
    <property type="status" value="NOT_ANNOTATED_CDS"/>
    <property type="molecule type" value="Genomic_DNA"/>
</dbReference>
<dbReference type="EMBL" id="BC027237">
    <property type="protein sequence ID" value="AAH27237.1"/>
    <property type="status" value="ALT_INIT"/>
    <property type="molecule type" value="mRNA"/>
</dbReference>
<dbReference type="EMBL" id="BC101724">
    <property type="protein sequence ID" value="AAI01725.1"/>
    <property type="molecule type" value="mRNA"/>
</dbReference>
<dbReference type="EMBL" id="BC111954">
    <property type="protein sequence ID" value="AAI11955.1"/>
    <property type="molecule type" value="mRNA"/>
</dbReference>
<dbReference type="EMBL" id="BC143525">
    <property type="protein sequence ID" value="AAI43526.1"/>
    <property type="molecule type" value="mRNA"/>
</dbReference>
<dbReference type="CCDS" id="CCDS47916.1">
    <molecule id="Q96DN5-3"/>
</dbReference>
<dbReference type="CCDS" id="CCDS6338.1">
    <molecule id="Q96DN5-1"/>
</dbReference>
<dbReference type="RefSeq" id="NP_001138560.1">
    <molecule id="Q96DN5-3"/>
    <property type="nucleotide sequence ID" value="NM_001145088.2"/>
</dbReference>
<dbReference type="RefSeq" id="NP_001350077.1">
    <molecule id="Q96DN5-2"/>
    <property type="nucleotide sequence ID" value="NM_001363148.1"/>
</dbReference>
<dbReference type="RefSeq" id="NP_663622.2">
    <molecule id="Q96DN5-1"/>
    <property type="nucleotide sequence ID" value="NM_145647.4"/>
</dbReference>
<dbReference type="RefSeq" id="XP_005251160.1">
    <property type="nucleotide sequence ID" value="XM_005251103.1"/>
</dbReference>
<dbReference type="SMR" id="Q96DN5"/>
<dbReference type="BioGRID" id="125037">
    <property type="interactions" value="67"/>
</dbReference>
<dbReference type="FunCoup" id="Q96DN5">
    <property type="interactions" value="1309"/>
</dbReference>
<dbReference type="IntAct" id="Q96DN5">
    <property type="interactions" value="32"/>
</dbReference>
<dbReference type="MINT" id="Q96DN5"/>
<dbReference type="STRING" id="9606.ENSP00000287380"/>
<dbReference type="CarbonylDB" id="Q96DN5"/>
<dbReference type="iPTMnet" id="Q96DN5"/>
<dbReference type="PhosphoSitePlus" id="Q96DN5"/>
<dbReference type="BioMuta" id="TBC1D31"/>
<dbReference type="DMDM" id="116242845"/>
<dbReference type="jPOST" id="Q96DN5"/>
<dbReference type="MassIVE" id="Q96DN5"/>
<dbReference type="PaxDb" id="9606-ENSP00000287380"/>
<dbReference type="PeptideAtlas" id="Q96DN5"/>
<dbReference type="ProteomicsDB" id="76299">
    <molecule id="Q96DN5-1"/>
</dbReference>
<dbReference type="ProteomicsDB" id="76300">
    <molecule id="Q96DN5-2"/>
</dbReference>
<dbReference type="ProteomicsDB" id="76301">
    <molecule id="Q96DN5-3"/>
</dbReference>
<dbReference type="Pumba" id="Q96DN5"/>
<dbReference type="Antibodypedia" id="13779">
    <property type="antibodies" value="37 antibodies from 10 providers"/>
</dbReference>
<dbReference type="DNASU" id="93594"/>
<dbReference type="Ensembl" id="ENST00000287380.6">
    <molecule id="Q96DN5-1"/>
    <property type="protein sequence ID" value="ENSP00000287380.1"/>
    <property type="gene ID" value="ENSG00000156787.17"/>
</dbReference>
<dbReference type="Ensembl" id="ENST00000327098.9">
    <molecule id="Q96DN5-3"/>
    <property type="protein sequence ID" value="ENSP00000312701.5"/>
    <property type="gene ID" value="ENSG00000156787.17"/>
</dbReference>
<dbReference type="GeneID" id="93594"/>
<dbReference type="KEGG" id="hsa:93594"/>
<dbReference type="MANE-Select" id="ENST00000287380.6">
    <property type="protein sequence ID" value="ENSP00000287380.1"/>
    <property type="RefSeq nucleotide sequence ID" value="NM_145647.4"/>
    <property type="RefSeq protein sequence ID" value="NP_663622.2"/>
</dbReference>
<dbReference type="UCSC" id="uc003ypp.3">
    <molecule id="Q96DN5-1"/>
    <property type="organism name" value="human"/>
</dbReference>
<dbReference type="AGR" id="HGNC:30888"/>
<dbReference type="CTD" id="93594"/>
<dbReference type="DisGeNET" id="93594"/>
<dbReference type="GeneCards" id="TBC1D31"/>
<dbReference type="HGNC" id="HGNC:30888">
    <property type="gene designation" value="TBC1D31"/>
</dbReference>
<dbReference type="HPA" id="ENSG00000156787">
    <property type="expression patterns" value="Tissue enhanced (lymphoid)"/>
</dbReference>
<dbReference type="neXtProt" id="NX_Q96DN5"/>
<dbReference type="OpenTargets" id="ENSG00000156787"/>
<dbReference type="PharmGKB" id="PA142670600"/>
<dbReference type="VEuPathDB" id="HostDB:ENSG00000156787"/>
<dbReference type="eggNOG" id="KOG0295">
    <property type="taxonomic scope" value="Eukaryota"/>
</dbReference>
<dbReference type="eggNOG" id="KOG1093">
    <property type="taxonomic scope" value="Eukaryota"/>
</dbReference>
<dbReference type="GeneTree" id="ENSGT00940000153859"/>
<dbReference type="HOGENOM" id="CLU_003330_0_0_1"/>
<dbReference type="InParanoid" id="Q96DN5"/>
<dbReference type="OMA" id="GCYPEKY"/>
<dbReference type="OrthoDB" id="5578278at2759"/>
<dbReference type="PAN-GO" id="Q96DN5">
    <property type="GO annotations" value="1 GO annotation based on evolutionary models"/>
</dbReference>
<dbReference type="PhylomeDB" id="Q96DN5"/>
<dbReference type="TreeFam" id="TF324799"/>
<dbReference type="PathwayCommons" id="Q96DN5"/>
<dbReference type="SignaLink" id="Q96DN5"/>
<dbReference type="BioGRID-ORCS" id="93594">
    <property type="hits" value="37 hits in 1147 CRISPR screens"/>
</dbReference>
<dbReference type="CD-CODE" id="8C2F96ED">
    <property type="entry name" value="Centrosome"/>
</dbReference>
<dbReference type="ChiTaRS" id="TBC1D31">
    <property type="organism name" value="human"/>
</dbReference>
<dbReference type="GenomeRNAi" id="93594"/>
<dbReference type="Pharos" id="Q96DN5">
    <property type="development level" value="Tdark"/>
</dbReference>
<dbReference type="PRO" id="PR:Q96DN5"/>
<dbReference type="Proteomes" id="UP000005640">
    <property type="component" value="Chromosome 8"/>
</dbReference>
<dbReference type="RNAct" id="Q96DN5">
    <property type="molecule type" value="protein"/>
</dbReference>
<dbReference type="Bgee" id="ENSG00000156787">
    <property type="expression patterns" value="Expressed in secondary oocyte and 145 other cell types or tissues"/>
</dbReference>
<dbReference type="ExpressionAtlas" id="Q96DN5">
    <property type="expression patterns" value="baseline and differential"/>
</dbReference>
<dbReference type="GO" id="GO:0034451">
    <property type="term" value="C:centriolar satellite"/>
    <property type="evidence" value="ECO:0000314"/>
    <property type="project" value="UniProtKB"/>
</dbReference>
<dbReference type="GO" id="GO:0005813">
    <property type="term" value="C:centrosome"/>
    <property type="evidence" value="ECO:0000314"/>
    <property type="project" value="HPA"/>
</dbReference>
<dbReference type="GO" id="GO:0036064">
    <property type="term" value="C:ciliary basal body"/>
    <property type="evidence" value="ECO:0000314"/>
    <property type="project" value="HPA"/>
</dbReference>
<dbReference type="GO" id="GO:0005794">
    <property type="term" value="C:Golgi apparatus"/>
    <property type="evidence" value="ECO:0000314"/>
    <property type="project" value="HPA"/>
</dbReference>
<dbReference type="GO" id="GO:0060090">
    <property type="term" value="F:molecular adaptor activity"/>
    <property type="evidence" value="ECO:0000314"/>
    <property type="project" value="UniProtKB"/>
</dbReference>
<dbReference type="GO" id="GO:0060271">
    <property type="term" value="P:cilium assembly"/>
    <property type="evidence" value="ECO:0000315"/>
    <property type="project" value="UniProtKB"/>
</dbReference>
<dbReference type="FunFam" id="2.130.10.10:FF:000226">
    <property type="entry name" value="TBC1 domain family member 31"/>
    <property type="match status" value="1"/>
</dbReference>
<dbReference type="FunFam" id="2.130.10.10:FF:000185">
    <property type="entry name" value="TBC1 domain family member 31 isoform X1"/>
    <property type="match status" value="1"/>
</dbReference>
<dbReference type="FunFam" id="1.10.472.80:FF:000022">
    <property type="entry name" value="TBC1 domain family, member 31"/>
    <property type="match status" value="1"/>
</dbReference>
<dbReference type="Gene3D" id="1.10.472.80">
    <property type="entry name" value="Ypt/Rab-GAP domain of gyp1p, domain 3"/>
    <property type="match status" value="1"/>
</dbReference>
<dbReference type="Gene3D" id="2.130.10.10">
    <property type="entry name" value="YVTN repeat-like/Quinoprotein amine dehydrogenase"/>
    <property type="match status" value="2"/>
</dbReference>
<dbReference type="InterPro" id="IPR000195">
    <property type="entry name" value="Rab-GAP-TBC_dom"/>
</dbReference>
<dbReference type="InterPro" id="IPR035969">
    <property type="entry name" value="Rab-GAP_TBC_sf"/>
</dbReference>
<dbReference type="InterPro" id="IPR051570">
    <property type="entry name" value="TBC1_cilium_biogenesis"/>
</dbReference>
<dbReference type="InterPro" id="IPR015943">
    <property type="entry name" value="WD40/YVTN_repeat-like_dom_sf"/>
</dbReference>
<dbReference type="InterPro" id="IPR036322">
    <property type="entry name" value="WD40_repeat_dom_sf"/>
</dbReference>
<dbReference type="InterPro" id="IPR001680">
    <property type="entry name" value="WD40_rpt"/>
</dbReference>
<dbReference type="PANTHER" id="PTHR19853:SF1">
    <property type="entry name" value="TBC1 DOMAIN FAMILY MEMBER 31"/>
    <property type="match status" value="1"/>
</dbReference>
<dbReference type="PANTHER" id="PTHR19853">
    <property type="entry name" value="WD REPEAT CONTAINING PROTEIN 3 WDR3"/>
    <property type="match status" value="1"/>
</dbReference>
<dbReference type="Pfam" id="PF00566">
    <property type="entry name" value="RabGAP-TBC"/>
    <property type="match status" value="1"/>
</dbReference>
<dbReference type="Pfam" id="PF00400">
    <property type="entry name" value="WD40"/>
    <property type="match status" value="1"/>
</dbReference>
<dbReference type="SMART" id="SM00320">
    <property type="entry name" value="WD40"/>
    <property type="match status" value="7"/>
</dbReference>
<dbReference type="SUPFAM" id="SSF50978">
    <property type="entry name" value="WD40 repeat-like"/>
    <property type="match status" value="1"/>
</dbReference>
<dbReference type="SUPFAM" id="SSF47923">
    <property type="entry name" value="Ypt/Rab-GAP domain of gyp1p"/>
    <property type="match status" value="1"/>
</dbReference>
<dbReference type="PROSITE" id="PS50086">
    <property type="entry name" value="TBC_RABGAP"/>
    <property type="match status" value="1"/>
</dbReference>
<dbReference type="PROSITE" id="PS00678">
    <property type="entry name" value="WD_REPEATS_1"/>
    <property type="match status" value="1"/>
</dbReference>
<dbReference type="PROSITE" id="PS50294">
    <property type="entry name" value="WD_REPEATS_REGION"/>
    <property type="match status" value="1"/>
</dbReference>
<accession>Q96DN5</accession>
<accession>B7ZL19</accession>
<accession>Q2M2J9</accession>
<accession>Q3MIR6</accession>
<accession>Q8TBP9</accession>
<keyword id="KW-0025">Alternative splicing</keyword>
<keyword id="KW-0966">Cell projection</keyword>
<keyword id="KW-0970">Cilium biogenesis/degradation</keyword>
<keyword id="KW-0175">Coiled coil</keyword>
<keyword id="KW-0963">Cytoplasm</keyword>
<keyword id="KW-0206">Cytoskeleton</keyword>
<keyword id="KW-1267">Proteomics identification</keyword>
<keyword id="KW-1185">Reference proteome</keyword>
<keyword id="KW-0677">Repeat</keyword>
<keyword id="KW-0853">WD repeat</keyword>
<organism>
    <name type="scientific">Homo sapiens</name>
    <name type="common">Human</name>
    <dbReference type="NCBI Taxonomy" id="9606"/>
    <lineage>
        <taxon>Eukaryota</taxon>
        <taxon>Metazoa</taxon>
        <taxon>Chordata</taxon>
        <taxon>Craniata</taxon>
        <taxon>Vertebrata</taxon>
        <taxon>Euteleostomi</taxon>
        <taxon>Mammalia</taxon>
        <taxon>Eutheria</taxon>
        <taxon>Euarchontoglires</taxon>
        <taxon>Primates</taxon>
        <taxon>Haplorrhini</taxon>
        <taxon>Catarrhini</taxon>
        <taxon>Hominidae</taxon>
        <taxon>Homo</taxon>
    </lineage>
</organism>
<evidence type="ECO:0000255" key="1"/>
<evidence type="ECO:0000255" key="2">
    <source>
        <dbReference type="PROSITE-ProRule" id="PRU00163"/>
    </source>
</evidence>
<evidence type="ECO:0000256" key="3">
    <source>
        <dbReference type="SAM" id="MobiDB-lite"/>
    </source>
</evidence>
<evidence type="ECO:0000269" key="4">
    <source>
    </source>
</evidence>
<evidence type="ECO:0000269" key="5">
    <source>
    </source>
</evidence>
<evidence type="ECO:0000303" key="6">
    <source>
    </source>
</evidence>
<evidence type="ECO:0000305" key="7"/>
<evidence type="ECO:0000305" key="8">
    <source>
    </source>
</evidence>
<evidence type="ECO:0000312" key="9">
    <source>
        <dbReference type="HGNC" id="HGNC:30888"/>
    </source>
</evidence>
<gene>
    <name evidence="9" type="primary">TBC1D31</name>
    <name evidence="9" type="synonym">WDR67</name>
</gene>
<name>TBC31_HUMAN</name>
<proteinExistence type="evidence at protein level"/>